<protein>
    <recommendedName>
        <fullName>tRNA pseudouridine synthase C</fullName>
        <ecNumber>5.4.99.26</ecNumber>
    </recommendedName>
    <alternativeName>
        <fullName>tRNA pseudouridine(65) synthase</fullName>
    </alternativeName>
    <alternativeName>
        <fullName>tRNA pseudouridylate synthase C</fullName>
    </alternativeName>
    <alternativeName>
        <fullName>tRNA-uridine isomerase C</fullName>
    </alternativeName>
</protein>
<comment type="function">
    <text evidence="1">Responsible for synthesis of pseudouridine from uracil-65 in transfer RNAs.</text>
</comment>
<comment type="catalytic activity">
    <reaction>
        <text>uridine(65) in tRNA = pseudouridine(65) in tRNA</text>
        <dbReference type="Rhea" id="RHEA:42536"/>
        <dbReference type="Rhea" id="RHEA-COMP:10103"/>
        <dbReference type="Rhea" id="RHEA-COMP:10104"/>
        <dbReference type="ChEBI" id="CHEBI:65314"/>
        <dbReference type="ChEBI" id="CHEBI:65315"/>
        <dbReference type="EC" id="5.4.99.26"/>
    </reaction>
</comment>
<comment type="similarity">
    <text evidence="2">Belongs to the pseudouridine synthase RluA family.</text>
</comment>
<evidence type="ECO:0000250" key="1"/>
<evidence type="ECO:0000305" key="2"/>
<feature type="chain" id="PRO_0000162718" description="tRNA pseudouridine synthase C">
    <location>
        <begin position="1"/>
        <end position="260"/>
    </location>
</feature>
<feature type="active site" evidence="1">
    <location>
        <position position="54"/>
    </location>
</feature>
<organism>
    <name type="scientific">Salmonella typhimurium (strain LT2 / SGSC1412 / ATCC 700720)</name>
    <dbReference type="NCBI Taxonomy" id="99287"/>
    <lineage>
        <taxon>Bacteria</taxon>
        <taxon>Pseudomonadati</taxon>
        <taxon>Pseudomonadota</taxon>
        <taxon>Gammaproteobacteria</taxon>
        <taxon>Enterobacterales</taxon>
        <taxon>Enterobacteriaceae</taxon>
        <taxon>Salmonella</taxon>
    </lineage>
</organism>
<name>TRUC_SALTY</name>
<keyword id="KW-0413">Isomerase</keyword>
<keyword id="KW-1185">Reference proteome</keyword>
<keyword id="KW-0819">tRNA processing</keyword>
<accession>Q8ZMD5</accession>
<sequence>MLEILYQDPWLVAVNKPAGWLVHRSWLDRDEKVVVMQTVRDQIGQHVFTAHRLDRPTSGVLLMGLSSEAGRRLAQQFEQHHIRKRYHAIVRGWLMDDAVLDYPLVEERDKIADKFAREDKAPQPAVTQYRGLATVEMAVPTGRYPTTRYGLVELEPKTGRKHQLRRHLAHLRHPIIGDSKHGDLRQNRSAAEHFACRRLMLHASRLELTHPFTGQPLIIQAGLDETWMQALTQFGWRGLLPDNERVEFTAASRQDETHLT</sequence>
<proteinExistence type="inferred from homology"/>
<dbReference type="EC" id="5.4.99.26"/>
<dbReference type="EMBL" id="AE006468">
    <property type="protein sequence ID" value="AAL21844.1"/>
    <property type="molecule type" value="Genomic_DNA"/>
</dbReference>
<dbReference type="RefSeq" id="WP_000890027.1">
    <property type="nucleotide sequence ID" value="NC_003197.2"/>
</dbReference>
<dbReference type="SMR" id="Q8ZMD5"/>
<dbReference type="STRING" id="99287.STM2964"/>
<dbReference type="PaxDb" id="99287-STM2964"/>
<dbReference type="KEGG" id="stm:STM2964"/>
<dbReference type="PATRIC" id="fig|99287.12.peg.3137"/>
<dbReference type="HOGENOM" id="CLU_016902_11_4_6"/>
<dbReference type="OMA" id="DRHETQF"/>
<dbReference type="PhylomeDB" id="Q8ZMD5"/>
<dbReference type="BioCyc" id="SENT99287:STM2964-MONOMER"/>
<dbReference type="Proteomes" id="UP000001014">
    <property type="component" value="Chromosome"/>
</dbReference>
<dbReference type="GO" id="GO:0009982">
    <property type="term" value="F:pseudouridine synthase activity"/>
    <property type="evidence" value="ECO:0000318"/>
    <property type="project" value="GO_Central"/>
</dbReference>
<dbReference type="GO" id="GO:0003723">
    <property type="term" value="F:RNA binding"/>
    <property type="evidence" value="ECO:0007669"/>
    <property type="project" value="InterPro"/>
</dbReference>
<dbReference type="GO" id="GO:0160149">
    <property type="term" value="F:tRNA pseudouridine(65) synthase activity"/>
    <property type="evidence" value="ECO:0007669"/>
    <property type="project" value="UniProtKB-EC"/>
</dbReference>
<dbReference type="GO" id="GO:0000455">
    <property type="term" value="P:enzyme-directed rRNA pseudouridine synthesis"/>
    <property type="evidence" value="ECO:0000318"/>
    <property type="project" value="GO_Central"/>
</dbReference>
<dbReference type="GO" id="GO:0008033">
    <property type="term" value="P:tRNA processing"/>
    <property type="evidence" value="ECO:0007669"/>
    <property type="project" value="UniProtKB-KW"/>
</dbReference>
<dbReference type="CDD" id="cd02563">
    <property type="entry name" value="PseudoU_synth_TruC"/>
    <property type="match status" value="1"/>
</dbReference>
<dbReference type="FunFam" id="3.30.2350.10:FF:000008">
    <property type="entry name" value="tRNA pseudouridine synthase C"/>
    <property type="match status" value="1"/>
</dbReference>
<dbReference type="Gene3D" id="3.30.2350.10">
    <property type="entry name" value="Pseudouridine synthase"/>
    <property type="match status" value="1"/>
</dbReference>
<dbReference type="InterPro" id="IPR020103">
    <property type="entry name" value="PsdUridine_synth_cat_dom_sf"/>
</dbReference>
<dbReference type="InterPro" id="IPR006224">
    <property type="entry name" value="PsdUridine_synth_RluA-like_CS"/>
</dbReference>
<dbReference type="InterPro" id="IPR006145">
    <property type="entry name" value="PsdUridine_synth_RsuA/RluA"/>
</dbReference>
<dbReference type="InterPro" id="IPR050188">
    <property type="entry name" value="RluA_PseudoU_synthase"/>
</dbReference>
<dbReference type="NCBIfam" id="NF008321">
    <property type="entry name" value="PRK11112.1"/>
    <property type="match status" value="1"/>
</dbReference>
<dbReference type="PANTHER" id="PTHR21600">
    <property type="entry name" value="MITOCHONDRIAL RNA PSEUDOURIDINE SYNTHASE"/>
    <property type="match status" value="1"/>
</dbReference>
<dbReference type="PANTHER" id="PTHR21600:SF56">
    <property type="entry name" value="TRNA PSEUDOURIDINE SYNTHASE C"/>
    <property type="match status" value="1"/>
</dbReference>
<dbReference type="Pfam" id="PF00849">
    <property type="entry name" value="PseudoU_synth_2"/>
    <property type="match status" value="1"/>
</dbReference>
<dbReference type="SUPFAM" id="SSF55120">
    <property type="entry name" value="Pseudouridine synthase"/>
    <property type="match status" value="1"/>
</dbReference>
<dbReference type="PROSITE" id="PS01129">
    <property type="entry name" value="PSI_RLU"/>
    <property type="match status" value="1"/>
</dbReference>
<gene>
    <name type="primary">truC</name>
    <name type="ordered locus">STM2964</name>
</gene>
<reference key="1">
    <citation type="journal article" date="2001" name="Nature">
        <title>Complete genome sequence of Salmonella enterica serovar Typhimurium LT2.</title>
        <authorList>
            <person name="McClelland M."/>
            <person name="Sanderson K.E."/>
            <person name="Spieth J."/>
            <person name="Clifton S.W."/>
            <person name="Latreille P."/>
            <person name="Courtney L."/>
            <person name="Porwollik S."/>
            <person name="Ali J."/>
            <person name="Dante M."/>
            <person name="Du F."/>
            <person name="Hou S."/>
            <person name="Layman D."/>
            <person name="Leonard S."/>
            <person name="Nguyen C."/>
            <person name="Scott K."/>
            <person name="Holmes A."/>
            <person name="Grewal N."/>
            <person name="Mulvaney E."/>
            <person name="Ryan E."/>
            <person name="Sun H."/>
            <person name="Florea L."/>
            <person name="Miller W."/>
            <person name="Stoneking T."/>
            <person name="Nhan M."/>
            <person name="Waterston R."/>
            <person name="Wilson R.K."/>
        </authorList>
    </citation>
    <scope>NUCLEOTIDE SEQUENCE [LARGE SCALE GENOMIC DNA]</scope>
    <source>
        <strain>LT2 / SGSC1412 / ATCC 700720</strain>
    </source>
</reference>